<evidence type="ECO:0000255" key="1">
    <source>
        <dbReference type="HAMAP-Rule" id="MF_00736"/>
    </source>
</evidence>
<evidence type="ECO:0000305" key="2"/>
<gene>
    <name evidence="1" type="primary">rplK</name>
    <name type="ordered locus">SPO3514</name>
</gene>
<accession>Q5LMP9</accession>
<organism>
    <name type="scientific">Ruegeria pomeroyi (strain ATCC 700808 / DSM 15171 / DSS-3)</name>
    <name type="common">Silicibacter pomeroyi</name>
    <dbReference type="NCBI Taxonomy" id="246200"/>
    <lineage>
        <taxon>Bacteria</taxon>
        <taxon>Pseudomonadati</taxon>
        <taxon>Pseudomonadota</taxon>
        <taxon>Alphaproteobacteria</taxon>
        <taxon>Rhodobacterales</taxon>
        <taxon>Roseobacteraceae</taxon>
        <taxon>Ruegeria</taxon>
    </lineage>
</organism>
<dbReference type="EMBL" id="CP000031">
    <property type="protein sequence ID" value="AAV96739.1"/>
    <property type="molecule type" value="Genomic_DNA"/>
</dbReference>
<dbReference type="RefSeq" id="WP_011049194.1">
    <property type="nucleotide sequence ID" value="NC_003911.12"/>
</dbReference>
<dbReference type="SMR" id="Q5LMP9"/>
<dbReference type="STRING" id="246200.SPO3514"/>
<dbReference type="PaxDb" id="246200-SPO3514"/>
<dbReference type="KEGG" id="sil:SPO3514"/>
<dbReference type="eggNOG" id="COG0080">
    <property type="taxonomic scope" value="Bacteria"/>
</dbReference>
<dbReference type="HOGENOM" id="CLU_074237_2_0_5"/>
<dbReference type="OrthoDB" id="9802408at2"/>
<dbReference type="Proteomes" id="UP000001023">
    <property type="component" value="Chromosome"/>
</dbReference>
<dbReference type="GO" id="GO:0022625">
    <property type="term" value="C:cytosolic large ribosomal subunit"/>
    <property type="evidence" value="ECO:0007669"/>
    <property type="project" value="TreeGrafter"/>
</dbReference>
<dbReference type="GO" id="GO:0070180">
    <property type="term" value="F:large ribosomal subunit rRNA binding"/>
    <property type="evidence" value="ECO:0007669"/>
    <property type="project" value="UniProtKB-UniRule"/>
</dbReference>
<dbReference type="GO" id="GO:0003735">
    <property type="term" value="F:structural constituent of ribosome"/>
    <property type="evidence" value="ECO:0007669"/>
    <property type="project" value="InterPro"/>
</dbReference>
<dbReference type="GO" id="GO:0006412">
    <property type="term" value="P:translation"/>
    <property type="evidence" value="ECO:0007669"/>
    <property type="project" value="UniProtKB-UniRule"/>
</dbReference>
<dbReference type="CDD" id="cd00349">
    <property type="entry name" value="Ribosomal_L11"/>
    <property type="match status" value="1"/>
</dbReference>
<dbReference type="FunFam" id="1.10.10.250:FF:000001">
    <property type="entry name" value="50S ribosomal protein L11"/>
    <property type="match status" value="1"/>
</dbReference>
<dbReference type="FunFam" id="3.30.1550.10:FF:000005">
    <property type="entry name" value="50S ribosomal protein L11"/>
    <property type="match status" value="1"/>
</dbReference>
<dbReference type="Gene3D" id="1.10.10.250">
    <property type="entry name" value="Ribosomal protein L11, C-terminal domain"/>
    <property type="match status" value="1"/>
</dbReference>
<dbReference type="Gene3D" id="3.30.1550.10">
    <property type="entry name" value="Ribosomal protein L11/L12, N-terminal domain"/>
    <property type="match status" value="1"/>
</dbReference>
<dbReference type="HAMAP" id="MF_00736">
    <property type="entry name" value="Ribosomal_uL11"/>
    <property type="match status" value="1"/>
</dbReference>
<dbReference type="InterPro" id="IPR000911">
    <property type="entry name" value="Ribosomal_uL11"/>
</dbReference>
<dbReference type="InterPro" id="IPR006519">
    <property type="entry name" value="Ribosomal_uL11_bac-typ"/>
</dbReference>
<dbReference type="InterPro" id="IPR020783">
    <property type="entry name" value="Ribosomal_uL11_C"/>
</dbReference>
<dbReference type="InterPro" id="IPR036769">
    <property type="entry name" value="Ribosomal_uL11_C_sf"/>
</dbReference>
<dbReference type="InterPro" id="IPR020784">
    <property type="entry name" value="Ribosomal_uL11_N"/>
</dbReference>
<dbReference type="InterPro" id="IPR036796">
    <property type="entry name" value="Ribosomal_uL11_N_sf"/>
</dbReference>
<dbReference type="NCBIfam" id="TIGR01632">
    <property type="entry name" value="L11_bact"/>
    <property type="match status" value="1"/>
</dbReference>
<dbReference type="PANTHER" id="PTHR11661">
    <property type="entry name" value="60S RIBOSOMAL PROTEIN L12"/>
    <property type="match status" value="1"/>
</dbReference>
<dbReference type="PANTHER" id="PTHR11661:SF1">
    <property type="entry name" value="LARGE RIBOSOMAL SUBUNIT PROTEIN UL11M"/>
    <property type="match status" value="1"/>
</dbReference>
<dbReference type="Pfam" id="PF00298">
    <property type="entry name" value="Ribosomal_L11"/>
    <property type="match status" value="1"/>
</dbReference>
<dbReference type="Pfam" id="PF03946">
    <property type="entry name" value="Ribosomal_L11_N"/>
    <property type="match status" value="1"/>
</dbReference>
<dbReference type="SMART" id="SM00649">
    <property type="entry name" value="RL11"/>
    <property type="match status" value="1"/>
</dbReference>
<dbReference type="SUPFAM" id="SSF54747">
    <property type="entry name" value="Ribosomal L11/L12e N-terminal domain"/>
    <property type="match status" value="1"/>
</dbReference>
<dbReference type="SUPFAM" id="SSF46906">
    <property type="entry name" value="Ribosomal protein L11, C-terminal domain"/>
    <property type="match status" value="1"/>
</dbReference>
<sequence>MAKKLIGTLKLQVPAGKANPSPPVGPALGQRGINIMEFCKAFNAKTADMEVGAPCPTVISYYQDKSFTMDIKTPPASYFLKKAAKIQSGANKPSRETAGTVTVAQIREIAEAKMKDLNANDIDGAMQIILGSARSMGIEVK</sequence>
<name>RL11_RUEPO</name>
<reference key="1">
    <citation type="journal article" date="2004" name="Nature">
        <title>Genome sequence of Silicibacter pomeroyi reveals adaptations to the marine environment.</title>
        <authorList>
            <person name="Moran M.A."/>
            <person name="Buchan A."/>
            <person name="Gonzalez J.M."/>
            <person name="Heidelberg J.F."/>
            <person name="Whitman W.B."/>
            <person name="Kiene R.P."/>
            <person name="Henriksen J.R."/>
            <person name="King G.M."/>
            <person name="Belas R."/>
            <person name="Fuqua C."/>
            <person name="Brinkac L.M."/>
            <person name="Lewis M."/>
            <person name="Johri S."/>
            <person name="Weaver B."/>
            <person name="Pai G."/>
            <person name="Eisen J.A."/>
            <person name="Rahe E."/>
            <person name="Sheldon W.M."/>
            <person name="Ye W."/>
            <person name="Miller T.R."/>
            <person name="Carlton J."/>
            <person name="Rasko D.A."/>
            <person name="Paulsen I.T."/>
            <person name="Ren Q."/>
            <person name="Daugherty S.C."/>
            <person name="DeBoy R.T."/>
            <person name="Dodson R.J."/>
            <person name="Durkin A.S."/>
            <person name="Madupu R."/>
            <person name="Nelson W.C."/>
            <person name="Sullivan S.A."/>
            <person name="Rosovitz M.J."/>
            <person name="Haft D.H."/>
            <person name="Selengut J."/>
            <person name="Ward N."/>
        </authorList>
    </citation>
    <scope>NUCLEOTIDE SEQUENCE [LARGE SCALE GENOMIC DNA]</scope>
    <source>
        <strain>ATCC 700808 / DSM 15171 / DSS-3</strain>
    </source>
</reference>
<reference key="2">
    <citation type="journal article" date="2014" name="Stand. Genomic Sci.">
        <title>An updated genome annotation for the model marine bacterium Ruegeria pomeroyi DSS-3.</title>
        <authorList>
            <person name="Rivers A.R."/>
            <person name="Smith C.B."/>
            <person name="Moran M.A."/>
        </authorList>
    </citation>
    <scope>GENOME REANNOTATION</scope>
    <source>
        <strain>ATCC 700808 / DSM 15171 / DSS-3</strain>
    </source>
</reference>
<protein>
    <recommendedName>
        <fullName evidence="1">Large ribosomal subunit protein uL11</fullName>
    </recommendedName>
    <alternativeName>
        <fullName evidence="2">50S ribosomal protein L11</fullName>
    </alternativeName>
</protein>
<feature type="chain" id="PRO_0000258214" description="Large ribosomal subunit protein uL11">
    <location>
        <begin position="1"/>
        <end position="141"/>
    </location>
</feature>
<comment type="function">
    <text evidence="1">Forms part of the ribosomal stalk which helps the ribosome interact with GTP-bound translation factors.</text>
</comment>
<comment type="subunit">
    <text evidence="1">Part of the ribosomal stalk of the 50S ribosomal subunit. Interacts with L10 and the large rRNA to form the base of the stalk. L10 forms an elongated spine to which L12 dimers bind in a sequential fashion forming a multimeric L10(L12)X complex.</text>
</comment>
<comment type="PTM">
    <text evidence="1">One or more lysine residues are methylated.</text>
</comment>
<comment type="similarity">
    <text evidence="1">Belongs to the universal ribosomal protein uL11 family.</text>
</comment>
<keyword id="KW-0488">Methylation</keyword>
<keyword id="KW-1185">Reference proteome</keyword>
<keyword id="KW-0687">Ribonucleoprotein</keyword>
<keyword id="KW-0689">Ribosomal protein</keyword>
<keyword id="KW-0694">RNA-binding</keyword>
<keyword id="KW-0699">rRNA-binding</keyword>
<proteinExistence type="inferred from homology"/>